<proteinExistence type="inferred from homology"/>
<sequence length="204" mass="22973">MSQVDINHARALVYQLLSSLFAREVDEQRLKELTSEAAQQFWEQLSLEANFTQSVDKIRSTLNGIKDDEALLELAADYCGLFLVGTKHSASPYASLYLSGEDEPLLFGEQHQQMSEFLHQSKLQVQSHFPEPADHLAVMLAYMAHLCCHSEDSVQLSFLQTCVDSWLAKFINQLTQCDKNGFYSAVATLTLAWVKQDIAQLEPA</sequence>
<keyword id="KW-0143">Chaperone</keyword>
<keyword id="KW-0963">Cytoplasm</keyword>
<gene>
    <name evidence="1" type="primary">torD</name>
    <name type="ordered locus">Sbal223_1153</name>
</gene>
<dbReference type="EMBL" id="CP001252">
    <property type="protein sequence ID" value="ACK45668.1"/>
    <property type="molecule type" value="Genomic_DNA"/>
</dbReference>
<dbReference type="RefSeq" id="WP_012587049.1">
    <property type="nucleotide sequence ID" value="NC_011663.1"/>
</dbReference>
<dbReference type="SMR" id="B8E6Q7"/>
<dbReference type="KEGG" id="sbp:Sbal223_1153"/>
<dbReference type="HOGENOM" id="CLU_077650_4_0_6"/>
<dbReference type="Proteomes" id="UP000002507">
    <property type="component" value="Chromosome"/>
</dbReference>
<dbReference type="GO" id="GO:0005737">
    <property type="term" value="C:cytoplasm"/>
    <property type="evidence" value="ECO:0007669"/>
    <property type="project" value="UniProtKB-SubCell"/>
</dbReference>
<dbReference type="GO" id="GO:0051259">
    <property type="term" value="P:protein complex oligomerization"/>
    <property type="evidence" value="ECO:0007669"/>
    <property type="project" value="InterPro"/>
</dbReference>
<dbReference type="GO" id="GO:0006457">
    <property type="term" value="P:protein folding"/>
    <property type="evidence" value="ECO:0007669"/>
    <property type="project" value="UniProtKB-UniRule"/>
</dbReference>
<dbReference type="Gene3D" id="1.20.120.1820">
    <property type="match status" value="1"/>
</dbReference>
<dbReference type="Gene3D" id="1.20.1280.20">
    <property type="entry name" value="HscB, C-terminal domain"/>
    <property type="match status" value="1"/>
</dbReference>
<dbReference type="HAMAP" id="MF_01150">
    <property type="entry name" value="TorD"/>
    <property type="match status" value="1"/>
</dbReference>
<dbReference type="InterPro" id="IPR023069">
    <property type="entry name" value="Chaperone_TorD"/>
</dbReference>
<dbReference type="InterPro" id="IPR020945">
    <property type="entry name" value="DMSO/NO3_reduct_chaperone"/>
</dbReference>
<dbReference type="InterPro" id="IPR036386">
    <property type="entry name" value="HscB_C_sf"/>
</dbReference>
<dbReference type="InterPro" id="IPR036411">
    <property type="entry name" value="TorD-like_sf"/>
</dbReference>
<dbReference type="InterPro" id="IPR050289">
    <property type="entry name" value="TorD/DmsD_chaperones"/>
</dbReference>
<dbReference type="NCBIfam" id="NF003442">
    <property type="entry name" value="PRK04976.1"/>
    <property type="match status" value="1"/>
</dbReference>
<dbReference type="PANTHER" id="PTHR34227:SF11">
    <property type="entry name" value="CHAPERONE PROTEIN TORD"/>
    <property type="match status" value="1"/>
</dbReference>
<dbReference type="PANTHER" id="PTHR34227">
    <property type="entry name" value="CHAPERONE PROTEIN YCDY"/>
    <property type="match status" value="1"/>
</dbReference>
<dbReference type="Pfam" id="PF02613">
    <property type="entry name" value="Nitrate_red_del"/>
    <property type="match status" value="1"/>
</dbReference>
<dbReference type="SUPFAM" id="SSF89155">
    <property type="entry name" value="TorD-like"/>
    <property type="match status" value="1"/>
</dbReference>
<name>TORD_SHEB2</name>
<accession>B8E6Q7</accession>
<protein>
    <recommendedName>
        <fullName evidence="1">Chaperone protein TorD</fullName>
    </recommendedName>
</protein>
<comment type="function">
    <text evidence="1">Involved in the biogenesis of TorA. Acts on TorA before the insertion of the molybdenum cofactor and, as a result, probably favors a conformation of the apoenzyme that is competent for acquiring the cofactor.</text>
</comment>
<comment type="subcellular location">
    <subcellularLocation>
        <location evidence="1">Cytoplasm</location>
    </subcellularLocation>
</comment>
<comment type="similarity">
    <text evidence="1">Belongs to the TorD/DmsD family. TorD subfamily.</text>
</comment>
<feature type="chain" id="PRO_1000164171" description="Chaperone protein TorD">
    <location>
        <begin position="1"/>
        <end position="204"/>
    </location>
</feature>
<reference key="1">
    <citation type="submission" date="2008-12" db="EMBL/GenBank/DDBJ databases">
        <title>Complete sequence of chromosome of Shewanella baltica OS223.</title>
        <authorList>
            <consortium name="US DOE Joint Genome Institute"/>
            <person name="Lucas S."/>
            <person name="Copeland A."/>
            <person name="Lapidus A."/>
            <person name="Glavina del Rio T."/>
            <person name="Dalin E."/>
            <person name="Tice H."/>
            <person name="Bruce D."/>
            <person name="Goodwin L."/>
            <person name="Pitluck S."/>
            <person name="Chertkov O."/>
            <person name="Meincke L."/>
            <person name="Brettin T."/>
            <person name="Detter J.C."/>
            <person name="Han C."/>
            <person name="Kuske C.R."/>
            <person name="Larimer F."/>
            <person name="Land M."/>
            <person name="Hauser L."/>
            <person name="Kyrpides N."/>
            <person name="Ovchinnikova G."/>
            <person name="Brettar I."/>
            <person name="Rodrigues J."/>
            <person name="Konstantinidis K."/>
            <person name="Tiedje J."/>
        </authorList>
    </citation>
    <scope>NUCLEOTIDE SEQUENCE [LARGE SCALE GENOMIC DNA]</scope>
    <source>
        <strain>OS223</strain>
    </source>
</reference>
<organism>
    <name type="scientific">Shewanella baltica (strain OS223)</name>
    <dbReference type="NCBI Taxonomy" id="407976"/>
    <lineage>
        <taxon>Bacteria</taxon>
        <taxon>Pseudomonadati</taxon>
        <taxon>Pseudomonadota</taxon>
        <taxon>Gammaproteobacteria</taxon>
        <taxon>Alteromonadales</taxon>
        <taxon>Shewanellaceae</taxon>
        <taxon>Shewanella</taxon>
    </lineage>
</organism>
<evidence type="ECO:0000255" key="1">
    <source>
        <dbReference type="HAMAP-Rule" id="MF_01150"/>
    </source>
</evidence>